<accession>Q569B5</accession>
<gene>
    <name evidence="4" type="primary">Lrrc14</name>
</gene>
<reference key="1">
    <citation type="submission" date="2005-08" db="EMBL/GenBank/DDBJ databases">
        <authorList>
            <person name="Mural R.J."/>
            <person name="Adams M.D."/>
            <person name="Myers E.W."/>
            <person name="Smith H.O."/>
            <person name="Venter J.C."/>
        </authorList>
    </citation>
    <scope>NUCLEOTIDE SEQUENCE [LARGE SCALE GENOMIC DNA]</scope>
    <source>
        <strain>Brown Norway</strain>
    </source>
</reference>
<reference key="2">
    <citation type="journal article" date="2004" name="Genome Res.">
        <title>The status, quality, and expansion of the NIH full-length cDNA project: the Mammalian Gene Collection (MGC).</title>
        <authorList>
            <consortium name="The MGC Project Team"/>
        </authorList>
    </citation>
    <scope>NUCLEOTIDE SEQUENCE [LARGE SCALE MRNA]</scope>
    <source>
        <tissue>Spleen</tissue>
    </source>
</reference>
<keyword id="KW-0963">Cytoplasm</keyword>
<keyword id="KW-0433">Leucine-rich repeat</keyword>
<keyword id="KW-1185">Reference proteome</keyword>
<keyword id="KW-0677">Repeat</keyword>
<sequence>MHTLVFLSTRQVLQCQPAACQALPLLPRELFPLLFKVAFMDKKTAVLRELVHTWPFPLLSFQQLLQECAHCSRALLQERLSTESMQAVILGLTARIHAREAEAGTQPVCRKHTLRVLDMTGLLDDGVEQDPGTMSMWDCTAAVARTCIAQQQVGTAKPGLSPVPVEIRVDLRVNRASYTFLREALQSSVDSLLRLCCRDLRAEDLPMRNTVALLQLLDAGCLRRIDLRFNNLGLRGLSVIIPHVARFQHLASLRLHYVHGDSRQPSVDGEDNFRYFLAQMGRFICLRELSIGSSLLSGRLDQLLSTLQRPLESLELAFCALLPEDLRFLAQSSHAAHLKKLDLSGNDLSGNQLTPFQGLLQAVAATLLHLELTECQIADAQLLATLPTLTRCASLRYLGLYGNPLSMAGLKELLRDSVIQAELRTVVHPFPVDCYEGLPWPPPASVLLEASINEEKFARVEAELHQLLLASGRAHVLWTTDIYGRLAADYFNL</sequence>
<dbReference type="EMBL" id="CH473950">
    <property type="protein sequence ID" value="EDM15941.1"/>
    <property type="molecule type" value="Genomic_DNA"/>
</dbReference>
<dbReference type="EMBL" id="CH473950">
    <property type="protein sequence ID" value="EDM15942.1"/>
    <property type="molecule type" value="Genomic_DNA"/>
</dbReference>
<dbReference type="EMBL" id="BC092583">
    <property type="protein sequence ID" value="AAH92583.1"/>
    <property type="molecule type" value="mRNA"/>
</dbReference>
<dbReference type="RefSeq" id="NP_001019525.1">
    <property type="nucleotide sequence ID" value="NM_001024354.1"/>
</dbReference>
<dbReference type="RefSeq" id="XP_006241924.1">
    <property type="nucleotide sequence ID" value="XM_006241862.5"/>
</dbReference>
<dbReference type="RefSeq" id="XP_006241927.1">
    <property type="nucleotide sequence ID" value="XM_006241865.2"/>
</dbReference>
<dbReference type="RefSeq" id="XP_017450542.1">
    <property type="nucleotide sequence ID" value="XM_017595053.1"/>
</dbReference>
<dbReference type="SMR" id="Q569B5"/>
<dbReference type="FunCoup" id="Q569B5">
    <property type="interactions" value="1951"/>
</dbReference>
<dbReference type="STRING" id="10116.ENSRNOP00000069176"/>
<dbReference type="PhosphoSitePlus" id="Q569B5"/>
<dbReference type="PaxDb" id="10116-ENSRNOP00000021673"/>
<dbReference type="GeneID" id="500900"/>
<dbReference type="UCSC" id="RGD:1560202">
    <property type="organism name" value="rat"/>
</dbReference>
<dbReference type="AGR" id="RGD:1560202"/>
<dbReference type="CTD" id="9684"/>
<dbReference type="RGD" id="1560202">
    <property type="gene designation" value="Lrrc14"/>
</dbReference>
<dbReference type="VEuPathDB" id="HostDB:ENSRNOG00000016128"/>
<dbReference type="eggNOG" id="ENOG502QWSJ">
    <property type="taxonomic scope" value="Eukaryota"/>
</dbReference>
<dbReference type="HOGENOM" id="CLU_039635_0_1_1"/>
<dbReference type="InParanoid" id="Q569B5"/>
<dbReference type="PhylomeDB" id="Q569B5"/>
<dbReference type="TreeFam" id="TF332708"/>
<dbReference type="Reactome" id="R-RNO-9758274">
    <property type="pathway name" value="Regulation of NF-kappa B signaling"/>
</dbReference>
<dbReference type="PRO" id="PR:Q569B5"/>
<dbReference type="Proteomes" id="UP000002494">
    <property type="component" value="Chromosome 7"/>
</dbReference>
<dbReference type="Proteomes" id="UP000234681">
    <property type="component" value="Chromosome 7"/>
</dbReference>
<dbReference type="Bgee" id="ENSRNOG00000016128">
    <property type="expression patterns" value="Expressed in pancreas and 20 other cell types or tissues"/>
</dbReference>
<dbReference type="ExpressionAtlas" id="Q569B5">
    <property type="expression patterns" value="baseline and differential"/>
</dbReference>
<dbReference type="GO" id="GO:0005737">
    <property type="term" value="C:cytoplasm"/>
    <property type="evidence" value="ECO:0000250"/>
    <property type="project" value="UniProtKB"/>
</dbReference>
<dbReference type="GO" id="GO:0019900">
    <property type="term" value="F:kinase binding"/>
    <property type="evidence" value="ECO:0000266"/>
    <property type="project" value="RGD"/>
</dbReference>
<dbReference type="GO" id="GO:0032088">
    <property type="term" value="P:negative regulation of NF-kappaB transcription factor activity"/>
    <property type="evidence" value="ECO:0000250"/>
    <property type="project" value="UniProtKB"/>
</dbReference>
<dbReference type="GO" id="GO:0034122">
    <property type="term" value="P:negative regulation of toll-like receptor signaling pathway"/>
    <property type="evidence" value="ECO:0000250"/>
    <property type="project" value="UniProtKB"/>
</dbReference>
<dbReference type="FunFam" id="3.80.10.10:FF:000119">
    <property type="entry name" value="Leucine-rich repeat-containing 14 isoform b"/>
    <property type="match status" value="1"/>
</dbReference>
<dbReference type="Gene3D" id="3.80.10.10">
    <property type="entry name" value="Ribonuclease Inhibitor"/>
    <property type="match status" value="1"/>
</dbReference>
<dbReference type="InterPro" id="IPR001611">
    <property type="entry name" value="Leu-rich_rpt"/>
</dbReference>
<dbReference type="InterPro" id="IPR032675">
    <property type="entry name" value="LRR_dom_sf"/>
</dbReference>
<dbReference type="InterPro" id="IPR050694">
    <property type="entry name" value="PRAME_domain"/>
</dbReference>
<dbReference type="PANTHER" id="PTHR14224:SF9">
    <property type="entry name" value="LEUCINE-RICH REPEAT-CONTAINING PROTEIN 14"/>
    <property type="match status" value="1"/>
</dbReference>
<dbReference type="PANTHER" id="PTHR14224">
    <property type="entry name" value="SIMILAR TO PREFERENTIALLY EXPRESSED ANTIGEN IN MELANOMA-LIKE 3"/>
    <property type="match status" value="1"/>
</dbReference>
<dbReference type="Pfam" id="PF13516">
    <property type="entry name" value="LRR_6"/>
    <property type="match status" value="2"/>
</dbReference>
<dbReference type="SUPFAM" id="SSF52047">
    <property type="entry name" value="RNI-like"/>
    <property type="match status" value="1"/>
</dbReference>
<protein>
    <recommendedName>
        <fullName evidence="1">Leucine-rich repeat-containing protein 14</fullName>
    </recommendedName>
</protein>
<feature type="chain" id="PRO_0000343682" description="Leucine-rich repeat-containing protein 14">
    <location>
        <begin position="1"/>
        <end position="493"/>
    </location>
</feature>
<feature type="repeat" description="LRR 1; degenerate" evidence="2">
    <location>
        <begin position="111"/>
        <end position="146"/>
    </location>
</feature>
<feature type="repeat" description="LRR 2; degenerate" evidence="2">
    <location>
        <begin position="194"/>
        <end position="218"/>
    </location>
</feature>
<feature type="repeat" description="LRR 3; degenerate" evidence="2">
    <location>
        <begin position="219"/>
        <end position="246"/>
    </location>
</feature>
<feature type="repeat" description="LRR 4; degenerate" evidence="2">
    <location>
        <begin position="247"/>
        <end position="282"/>
    </location>
</feature>
<feature type="repeat" description="LRR 5" evidence="2">
    <location>
        <begin position="283"/>
        <end position="307"/>
    </location>
</feature>
<feature type="repeat" description="LRR 6" evidence="2">
    <location>
        <begin position="308"/>
        <end position="339"/>
    </location>
</feature>
<feature type="repeat" description="LRR 7" evidence="2">
    <location>
        <begin position="340"/>
        <end position="360"/>
    </location>
</feature>
<feature type="repeat" description="LRR 8" evidence="2">
    <location>
        <begin position="364"/>
        <end position="391"/>
    </location>
</feature>
<feature type="repeat" description="LRR 9" evidence="2">
    <location>
        <begin position="392"/>
        <end position="416"/>
    </location>
</feature>
<organism>
    <name type="scientific">Rattus norvegicus</name>
    <name type="common">Rat</name>
    <dbReference type="NCBI Taxonomy" id="10116"/>
    <lineage>
        <taxon>Eukaryota</taxon>
        <taxon>Metazoa</taxon>
        <taxon>Chordata</taxon>
        <taxon>Craniata</taxon>
        <taxon>Vertebrata</taxon>
        <taxon>Euteleostomi</taxon>
        <taxon>Mammalia</taxon>
        <taxon>Eutheria</taxon>
        <taxon>Euarchontoglires</taxon>
        <taxon>Glires</taxon>
        <taxon>Rodentia</taxon>
        <taxon>Myomorpha</taxon>
        <taxon>Muroidea</taxon>
        <taxon>Muridae</taxon>
        <taxon>Murinae</taxon>
        <taxon>Rattus</taxon>
    </lineage>
</organism>
<name>LRC14_RAT</name>
<proteinExistence type="evidence at transcript level"/>
<evidence type="ECO:0000250" key="1">
    <source>
        <dbReference type="UniProtKB" id="Q15048"/>
    </source>
</evidence>
<evidence type="ECO:0000250" key="2">
    <source>
        <dbReference type="UniProtKB" id="Q3UWY1"/>
    </source>
</evidence>
<evidence type="ECO:0000305" key="3"/>
<evidence type="ECO:0000312" key="4">
    <source>
        <dbReference type="RGD" id="1560202"/>
    </source>
</evidence>
<comment type="function">
    <text evidence="1">Negatively regulates Toll-like receptor-mediated NF-kappa-B signaling by disrupting IKK core complex formation through interaction with IKBKB.</text>
</comment>
<comment type="subunit">
    <text evidence="1">Interacts with IKBKB; disrupts IKBKB-IKBKG interaction preventing I-kappa-B-kinase (IKK) core complex formation and leading to a decrease of IKBKB phosphorylation and NF-kappaB activation. Interacts with CHUK.</text>
</comment>
<comment type="subcellular location">
    <subcellularLocation>
        <location evidence="1">Cytoplasm</location>
    </subcellularLocation>
</comment>
<comment type="similarity">
    <text evidence="3">Belongs to the PRAME family. LRRC14 subfamily.</text>
</comment>